<proteinExistence type="inferred from homology"/>
<sequence>MTPEDFYMALKELGFDLSQKQKDQFQRYFELLVEWNEKINLTAITDKDEVFLKHFYDSLAPVLQGHIKNQSIQLLDIGAGAGFPSLPIKILCPNLDVTIIDSLNKRITFLNFLSDELGLSGVHFYHGRAEDFGQDKAFRAQFDIVTARAVARMQVLSELTIPFLKVGGQLIALKAAAADQELVDARNALNVLFAKPILNENYKLPNGDGRNITIIDKKKETPNKYPRRAGIPNKKPL</sequence>
<feature type="chain" id="PRO_0000184346" description="Ribosomal RNA small subunit methyltransferase G">
    <location>
        <begin position="1"/>
        <end position="237"/>
    </location>
</feature>
<feature type="binding site" evidence="1">
    <location>
        <position position="78"/>
    </location>
    <ligand>
        <name>S-adenosyl-L-methionine</name>
        <dbReference type="ChEBI" id="CHEBI:59789"/>
    </ligand>
</feature>
<feature type="binding site" evidence="1">
    <location>
        <position position="83"/>
    </location>
    <ligand>
        <name>S-adenosyl-L-methionine</name>
        <dbReference type="ChEBI" id="CHEBI:59789"/>
    </ligand>
</feature>
<feature type="binding site" evidence="1">
    <location>
        <begin position="129"/>
        <end position="130"/>
    </location>
    <ligand>
        <name>S-adenosyl-L-methionine</name>
        <dbReference type="ChEBI" id="CHEBI:59789"/>
    </ligand>
</feature>
<feature type="binding site" evidence="1">
    <location>
        <position position="148"/>
    </location>
    <ligand>
        <name>S-adenosyl-L-methionine</name>
        <dbReference type="ChEBI" id="CHEBI:59789"/>
    </ligand>
</feature>
<gene>
    <name evidence="1" type="primary">rsmG</name>
    <name type="ordered locus">stu0315</name>
</gene>
<evidence type="ECO:0000255" key="1">
    <source>
        <dbReference type="HAMAP-Rule" id="MF_00074"/>
    </source>
</evidence>
<protein>
    <recommendedName>
        <fullName evidence="1">Ribosomal RNA small subunit methyltransferase G</fullName>
        <ecNumber evidence="1">2.1.1.-</ecNumber>
    </recommendedName>
    <alternativeName>
        <fullName evidence="1">16S rRNA 7-methylguanosine methyltransferase</fullName>
        <shortName evidence="1">16S rRNA m7G methyltransferase</shortName>
    </alternativeName>
</protein>
<name>RSMG_STRT2</name>
<dbReference type="EC" id="2.1.1.-" evidence="1"/>
<dbReference type="EMBL" id="CP000023">
    <property type="protein sequence ID" value="AAV60037.1"/>
    <property type="molecule type" value="Genomic_DNA"/>
</dbReference>
<dbReference type="RefSeq" id="WP_002946490.1">
    <property type="nucleotide sequence ID" value="NC_006448.1"/>
</dbReference>
<dbReference type="SMR" id="Q5M5Y2"/>
<dbReference type="STRING" id="264199.stu0315"/>
<dbReference type="GeneID" id="66898235"/>
<dbReference type="KEGG" id="stl:stu0315"/>
<dbReference type="eggNOG" id="COG0357">
    <property type="taxonomic scope" value="Bacteria"/>
</dbReference>
<dbReference type="HOGENOM" id="CLU_065341_0_2_9"/>
<dbReference type="Proteomes" id="UP000001170">
    <property type="component" value="Chromosome"/>
</dbReference>
<dbReference type="GO" id="GO:0005829">
    <property type="term" value="C:cytosol"/>
    <property type="evidence" value="ECO:0007669"/>
    <property type="project" value="TreeGrafter"/>
</dbReference>
<dbReference type="GO" id="GO:0070043">
    <property type="term" value="F:rRNA (guanine-N7-)-methyltransferase activity"/>
    <property type="evidence" value="ECO:0007669"/>
    <property type="project" value="UniProtKB-UniRule"/>
</dbReference>
<dbReference type="CDD" id="cd02440">
    <property type="entry name" value="AdoMet_MTases"/>
    <property type="match status" value="1"/>
</dbReference>
<dbReference type="FunFam" id="3.40.50.150:FF:000041">
    <property type="entry name" value="Ribosomal RNA small subunit methyltransferase G"/>
    <property type="match status" value="1"/>
</dbReference>
<dbReference type="Gene3D" id="3.40.50.150">
    <property type="entry name" value="Vaccinia Virus protein VP39"/>
    <property type="match status" value="1"/>
</dbReference>
<dbReference type="HAMAP" id="MF_00074">
    <property type="entry name" value="16SrRNA_methyltr_G"/>
    <property type="match status" value="1"/>
</dbReference>
<dbReference type="InterPro" id="IPR003682">
    <property type="entry name" value="rRNA_ssu_MeTfrase_G"/>
</dbReference>
<dbReference type="InterPro" id="IPR029063">
    <property type="entry name" value="SAM-dependent_MTases_sf"/>
</dbReference>
<dbReference type="NCBIfam" id="TIGR00138">
    <property type="entry name" value="rsmG_gidB"/>
    <property type="match status" value="1"/>
</dbReference>
<dbReference type="PANTHER" id="PTHR31760">
    <property type="entry name" value="S-ADENOSYL-L-METHIONINE-DEPENDENT METHYLTRANSFERASES SUPERFAMILY PROTEIN"/>
    <property type="match status" value="1"/>
</dbReference>
<dbReference type="PANTHER" id="PTHR31760:SF0">
    <property type="entry name" value="S-ADENOSYL-L-METHIONINE-DEPENDENT METHYLTRANSFERASES SUPERFAMILY PROTEIN"/>
    <property type="match status" value="1"/>
</dbReference>
<dbReference type="Pfam" id="PF02527">
    <property type="entry name" value="GidB"/>
    <property type="match status" value="1"/>
</dbReference>
<dbReference type="SUPFAM" id="SSF53335">
    <property type="entry name" value="S-adenosyl-L-methionine-dependent methyltransferases"/>
    <property type="match status" value="1"/>
</dbReference>
<accession>Q5M5Y2</accession>
<organism>
    <name type="scientific">Streptococcus thermophilus (strain ATCC BAA-250 / LMG 18311)</name>
    <dbReference type="NCBI Taxonomy" id="264199"/>
    <lineage>
        <taxon>Bacteria</taxon>
        <taxon>Bacillati</taxon>
        <taxon>Bacillota</taxon>
        <taxon>Bacilli</taxon>
        <taxon>Lactobacillales</taxon>
        <taxon>Streptococcaceae</taxon>
        <taxon>Streptococcus</taxon>
    </lineage>
</organism>
<comment type="function">
    <text evidence="1">Specifically methylates the N7 position of a guanine in 16S rRNA.</text>
</comment>
<comment type="subcellular location">
    <subcellularLocation>
        <location evidence="1">Cytoplasm</location>
    </subcellularLocation>
</comment>
<comment type="similarity">
    <text evidence="1">Belongs to the methyltransferase superfamily. RNA methyltransferase RsmG family.</text>
</comment>
<keyword id="KW-0963">Cytoplasm</keyword>
<keyword id="KW-0489">Methyltransferase</keyword>
<keyword id="KW-1185">Reference proteome</keyword>
<keyword id="KW-0698">rRNA processing</keyword>
<keyword id="KW-0949">S-adenosyl-L-methionine</keyword>
<keyword id="KW-0808">Transferase</keyword>
<reference key="1">
    <citation type="journal article" date="2004" name="Nat. Biotechnol.">
        <title>Complete sequence and comparative genome analysis of the dairy bacterium Streptococcus thermophilus.</title>
        <authorList>
            <person name="Bolotin A."/>
            <person name="Quinquis B."/>
            <person name="Renault P."/>
            <person name="Sorokin A."/>
            <person name="Ehrlich S.D."/>
            <person name="Kulakauskas S."/>
            <person name="Lapidus A."/>
            <person name="Goltsman E."/>
            <person name="Mazur M."/>
            <person name="Pusch G.D."/>
            <person name="Fonstein M."/>
            <person name="Overbeek R."/>
            <person name="Kyprides N."/>
            <person name="Purnelle B."/>
            <person name="Prozzi D."/>
            <person name="Ngui K."/>
            <person name="Masuy D."/>
            <person name="Hancy F."/>
            <person name="Burteau S."/>
            <person name="Boutry M."/>
            <person name="Delcour J."/>
            <person name="Goffeau A."/>
            <person name="Hols P."/>
        </authorList>
    </citation>
    <scope>NUCLEOTIDE SEQUENCE [LARGE SCALE GENOMIC DNA]</scope>
    <source>
        <strain>ATCC BAA-250 / LMG 18311</strain>
    </source>
</reference>